<protein>
    <recommendedName>
        <fullName evidence="1">UPF0223 protein SAOUHSC_01044</fullName>
    </recommendedName>
</protein>
<proteinExistence type="inferred from homology"/>
<organism>
    <name type="scientific">Staphylococcus aureus (strain NCTC 8325 / PS 47)</name>
    <dbReference type="NCBI Taxonomy" id="93061"/>
    <lineage>
        <taxon>Bacteria</taxon>
        <taxon>Bacillati</taxon>
        <taxon>Bacillota</taxon>
        <taxon>Bacilli</taxon>
        <taxon>Bacillales</taxon>
        <taxon>Staphylococcaceae</taxon>
        <taxon>Staphylococcus</taxon>
    </lineage>
</organism>
<name>Y1044_STAA8</name>
<sequence length="91" mass="10692">MEYEYPIDLDWSNEEMISVINFFNHVEKYYESGVTAGDFMGAYKRFKEIVPAKAEEKQIFNTFEKSSGYNSYKAVQDVKTHSEEQRVTAKK</sequence>
<gene>
    <name type="ordered locus">SAOUHSC_01044</name>
</gene>
<feature type="chain" id="PRO_1000064146" description="UPF0223 protein SAOUHSC_01044">
    <location>
        <begin position="1"/>
        <end position="91"/>
    </location>
</feature>
<evidence type="ECO:0000255" key="1">
    <source>
        <dbReference type="HAMAP-Rule" id="MF_01041"/>
    </source>
</evidence>
<reference key="1">
    <citation type="book" date="2006" name="Gram positive pathogens, 2nd edition">
        <title>The Staphylococcus aureus NCTC 8325 genome.</title>
        <editorList>
            <person name="Fischetti V."/>
            <person name="Novick R."/>
            <person name="Ferretti J."/>
            <person name="Portnoy D."/>
            <person name="Rood J."/>
        </editorList>
        <authorList>
            <person name="Gillaspy A.F."/>
            <person name="Worrell V."/>
            <person name="Orvis J."/>
            <person name="Roe B.A."/>
            <person name="Dyer D.W."/>
            <person name="Iandolo J.J."/>
        </authorList>
    </citation>
    <scope>NUCLEOTIDE SEQUENCE [LARGE SCALE GENOMIC DNA]</scope>
    <source>
        <strain>NCTC 8325 / PS 47</strain>
    </source>
</reference>
<keyword id="KW-1185">Reference proteome</keyword>
<comment type="similarity">
    <text evidence="1">Belongs to the UPF0223 family.</text>
</comment>
<accession>Q2G2A2</accession>
<dbReference type="EMBL" id="CP000253">
    <property type="protein sequence ID" value="ABD30164.1"/>
    <property type="molecule type" value="Genomic_DNA"/>
</dbReference>
<dbReference type="RefSeq" id="WP_000455597.1">
    <property type="nucleotide sequence ID" value="NZ_LS483365.1"/>
</dbReference>
<dbReference type="RefSeq" id="YP_499593.1">
    <property type="nucleotide sequence ID" value="NC_007795.1"/>
</dbReference>
<dbReference type="SMR" id="Q2G2A2"/>
<dbReference type="STRING" id="93061.SAOUHSC_01044"/>
<dbReference type="PaxDb" id="1280-SAXN108_1094"/>
<dbReference type="GeneID" id="3919892"/>
<dbReference type="KEGG" id="sao:SAOUHSC_01044"/>
<dbReference type="PATRIC" id="fig|93061.5.peg.959"/>
<dbReference type="eggNOG" id="COG4476">
    <property type="taxonomic scope" value="Bacteria"/>
</dbReference>
<dbReference type="HOGENOM" id="CLU_166693_0_0_9"/>
<dbReference type="OrthoDB" id="1649074at2"/>
<dbReference type="PRO" id="PR:Q2G2A2"/>
<dbReference type="Proteomes" id="UP000008816">
    <property type="component" value="Chromosome"/>
</dbReference>
<dbReference type="Gene3D" id="1.10.220.80">
    <property type="entry name" value="BH2638-like"/>
    <property type="match status" value="1"/>
</dbReference>
<dbReference type="HAMAP" id="MF_01041">
    <property type="entry name" value="UPF0223"/>
    <property type="match status" value="1"/>
</dbReference>
<dbReference type="InterPro" id="IPR023324">
    <property type="entry name" value="BH2638-like_sf"/>
</dbReference>
<dbReference type="InterPro" id="IPR007920">
    <property type="entry name" value="UPF0223"/>
</dbReference>
<dbReference type="NCBIfam" id="NF003353">
    <property type="entry name" value="PRK04387.1"/>
    <property type="match status" value="1"/>
</dbReference>
<dbReference type="Pfam" id="PF05256">
    <property type="entry name" value="UPF0223"/>
    <property type="match status" value="1"/>
</dbReference>
<dbReference type="PIRSF" id="PIRSF037260">
    <property type="entry name" value="UPF0223"/>
    <property type="match status" value="1"/>
</dbReference>
<dbReference type="SUPFAM" id="SSF158504">
    <property type="entry name" value="BH2638-like"/>
    <property type="match status" value="1"/>
</dbReference>